<gene>
    <name evidence="7" type="primary">Brca2</name>
    <name type="synonym">Fancd1</name>
</gene>
<sequence length="3343" mass="372216">MTVEYKRRPTFWEIFKARCSTADLGPISLNWFEELFSEAPPYNTEHPEESEYKPQGHEPQLFKTPQRNPSYHQFASTPIMFKEQSQTLPLDQSPFKELGNVVANSKRKHHSKKKARKDPVVDVASLPLKACPSESPCTPRCTQVAPQRRKPVVSGSLFYTPKLEETPKHISESLGVEVDPDMSWTSSLATPPTLSSTVLIARDEEAHRNAFPADSPASLKSYFSNHNESLKKNDRFIPSVSDSENKSQQEAFSQGLEKMLGDSSSKINRFRDCLRKPIPNVLEDGETAVDTSGEDSFSLCFPKRRTRNLQKTRMGKMKKKIFSETRTDGLSEEARGQADDKNSFALEIEPRDSEPLDPSVTNQKPLYSQSGDISSEAGQCSDSIWSQPDPSGLNGTQTRKIPLLHISFHKQSILEDFIDMKKEGTGSITFPHISSLPEPEKMFSEETLVDKEHEGQHLESLEDSISGKQMVSGTSQTACLSPSIRKSIVKMREPLEETLDTVFSDSMTSSAFTEELDASAGGLEIHTACSQREDSLCPSSVDTGSWPTTLTDTSATVKNAGLITTLKNKRRKFIYSVSDDASHQGKKLQTQRQSELTNLSAPFEASAFEVPFPFTNVDSGIPDSSIKRSNLPNDPEEPSLSLTNSFVTAASKEISYIHALISQDLNDKEAILSEEKPQPYTALEADFLSCLPERSCENDQKSPKVSDRKEKVLVSACRPSGRLAAAVQLSSISFDSQENPLGSHNVTSTLKLTPSPKTPLSKPVVVSRGKMCKMPEKLQCKSCKDNIELSKNIPLGVNEMCVLSENSETPELLPPLEYITEVSSSVKSQFNQNTKIAVVQKDQKDSTFISEVTVHMNSEELFPEKENNFAFQVTNESNKPNIGSTVEFQEEDLSHAKGHSLKNSPMTVDRDLDDEQAGQVLITEDSDSLAVVHDCTKKSRNTIEQHQKGTADKDFKSNSSLYLKSDGNNDYLDKWSEFLDPLMNHKLGGSFRTASNKEIKLSEDNVKKSKMFFKDIEEQYPTSLDCIDTVSTLQLANKKRLSEPHTFDLKSGTTVSTQCHSQSSVSHEDTHTAPQMLSSKQDFHSSHNLTPSQKAEITELSTILEESGSQFEFTQFKNPSHIAQNNTSAVLGNQMAVVRTASEEWKDVDLHLPLNPSSVGQIDHNKKFECLVGVKQSSSHLLEDTCNQNTSCFLPIKEMEFGGFCSALGTKLSVSNEALRKAMKLFSDIENISEEPSTKVGPRGFSSCAHHDSVASVFKIKKQNTDKSFDEKSSKCQVTVQNNKEMTTCILVDENPENYVKNIKQDNNYTGSQRNAYKLENSDVSKSSTSGTVYINKGDSDLPFAAEKGNKYPESCTQYVREENAQIKESVSDLTCLEVMKAEETCHMKSSDKEQLPSDKMEQNMKEFNISFQTASGKNIRVSKESLNKSVNILDQETEDLTVTSDSLNSKILCGINKDKMHISCHKKSINIKKVFEEHFPIGTVSQLPALQQYPEYEIESIKEPTLLSFHTASGKKVKIMQESLDKVKNLFDETQYVRKTTNFGHQESKPLKDREDYKERLTLAYEKIEVTASKCEEMQNFVSKQTEMLPQQNDHMYRQTENLTSNGSSPKVHGNIENKIEKNPRICCICQSSYFVTEDSALACYTGDSRKTCVGESSLSKGKKWLREQSDKLGTRNTIEIQCVKEHTEDFAGNALYEHSLVIIRTEIDTSHVSENQASTLFSDPNVCHSYLSHSSFCHHDDMHNDSGYFLKDKIDSDVQPDMKNTEGNAIFPKISATKEIKLHPQTVNEECVQKLETNASPYANKNIAIDSAMLDLRNCKVGSPVFITTHSQETVRMKEIFTDNCSKIVEQNRESKPDTCQTSCHKALDNSEDFICPSSSGDVCINSPMAIFYPQSEQILQHNQSVSGLKKAATPPVSLETWDTCKSIRGSPQEVHPSRTYGFFSTASGKAVQVSDASLEKARQVFSEIDGDAKQLASMVSLEGNEKSHHSVKRESSVVHNTHGVLSLRKTLPGNVSSFVFSGFSTAGGKLVTVSESALHKVKGMLEEFDLIRTEHTLQHSPTPEDVSKIPPQPCLESRTPEYSVSSKLQKTYNDKSRSPSNYKESGSSGNTQSLEVSPQLSQMERKQETQSVLGTKVSQRKTNILEKKQNLPQNIKIESNKMETFSDVSMKTNVGEYYSKEPENYFETEAVEIAKAFMEDDELTDSEQTHAKCSLFACPQNEALLNSRTRKRGGMAGVAVGQPPIKRSLLNEFDRIIESKGKSLTPSKSTPDGTIKDRRLFTHHMSLEPVTCGPFCSSKERQETQSPHVTSPAQGLQSKEHPSRHSAVGKSSSNPTVSALRSERTRHSVSDKSTKVFVPPFKVKSRFHRDEHFDSKNVNLEGKNQKSADGVSEDGNDSDFPQFNKDLMSSLQNARDLQDIRIKNKERHHLCPQPGSLYLTKSSTLPRISLQAAVGDSVPSACSPKQLYMYGVSKACISVNSKNAEYFQFAIEDHFGKEALCAGKGFRLADGGWLIPSDDGKAGKEEFYRALCDTPGVDPKLISSVWVSNHYRWIVWKLAAMEFAFPKEFANRCLNPERVLLQLKYRYDVEIDNSSRSALKKILERDDTAAKTLVLCVSDIISLSTNVSETSGSKASSEDSNKVDTIELTDGWYAVKAQLDPPLLALVKSGRLTVGQKIITQGAELVGSPDACAPLEAPDSLRLKISANSTRPARWHSKLGFFHDPRPFPLPLSSLFSDGGNVGCVDVIVQRVYPLQWVEKTVSGSYIFRNEREEEKEALRFAEAQQKKLEALFTKVHTELKEHEEDIAQRRVLSRALTRQQVHALQDGAELYAAVQDASDPEHLETCFSEEQLRALNNYRQMLSDKKQARIQSEFRKALEAAEKEEGLSRDVSTVWKLRVTSYKKREKSALLSIWRPSSDLPSLLTEGQRYRIYHLSVSKSKNKFEWPSIQLTATKRTQYQQLPVSSETLLQLYQPRELLPFSKLSDPAFQPPCSEVDVVGVVVSVVKPIGLAPLVYLSDECLHLLVVKFGIDLNEDIKPRVLIAASNLQWRPESTSRVPTLFAGNFSVFSASPKEAHFQERVTNMKHAIENIDTFYKEAEKKLIQVLKGDSPKWSTPNKDPTREPYPASTCSASDLASGGQLPRSSPTDQQSYRSPLSCCTPTGKSTPLAHSAWMAAKSCSGENEIEDPKTCRKKRALDLLSRLPLPPPLSPVCTFVSPAAQKAFQPPRSCGTKYPTPLKKEGPSSPWSRAPFQKASGVSLLDCDSVADEELALLSTQALVPHSVGGSEQVFPSDSTRTEGPSASTEARPANRSKRESLRDCRDDSDGKLAAETVPDYS</sequence>
<proteinExistence type="evidence at protein level"/>
<keyword id="KW-0002">3D-structure</keyword>
<keyword id="KW-0131">Cell cycle</keyword>
<keyword id="KW-0963">Cytoplasm</keyword>
<keyword id="KW-0206">Cytoskeleton</keyword>
<keyword id="KW-0227">DNA damage</keyword>
<keyword id="KW-0233">DNA recombination</keyword>
<keyword id="KW-0234">DNA repair</keyword>
<keyword id="KW-0238">DNA-binding</keyword>
<keyword id="KW-0539">Nucleus</keyword>
<keyword id="KW-0597">Phosphoprotein</keyword>
<keyword id="KW-1185">Reference proteome</keyword>
<keyword id="KW-0677">Repeat</keyword>
<keyword id="KW-0043">Tumor suppressor</keyword>
<keyword id="KW-0832">Ubl conjugation</keyword>
<protein>
    <recommendedName>
        <fullName evidence="6">Breast cancer type 2 susceptibility protein homolog</fullName>
    </recommendedName>
    <alternativeName>
        <fullName>Fanconi anemia group D1 protein homolog</fullName>
    </alternativeName>
</protein>
<organism>
    <name type="scientific">Rattus norvegicus</name>
    <name type="common">Rat</name>
    <dbReference type="NCBI Taxonomy" id="10116"/>
    <lineage>
        <taxon>Eukaryota</taxon>
        <taxon>Metazoa</taxon>
        <taxon>Chordata</taxon>
        <taxon>Craniata</taxon>
        <taxon>Vertebrata</taxon>
        <taxon>Euteleostomi</taxon>
        <taxon>Mammalia</taxon>
        <taxon>Eutheria</taxon>
        <taxon>Euarchontoglires</taxon>
        <taxon>Glires</taxon>
        <taxon>Rodentia</taxon>
        <taxon>Myomorpha</taxon>
        <taxon>Muroidea</taxon>
        <taxon>Muridae</taxon>
        <taxon>Murinae</taxon>
        <taxon>Rattus</taxon>
    </lineage>
</organism>
<dbReference type="EMBL" id="U89653">
    <property type="protein sequence ID" value="AAB71378.1"/>
    <property type="molecule type" value="mRNA"/>
</dbReference>
<dbReference type="PIR" id="T42207">
    <property type="entry name" value="T42207"/>
</dbReference>
<dbReference type="PDB" id="1IYJ">
    <property type="method" value="X-ray"/>
    <property type="resolution" value="3.40 A"/>
    <property type="chains" value="B/D=2335-3151"/>
</dbReference>
<dbReference type="PDBsum" id="1IYJ"/>
<dbReference type="SMR" id="O35923"/>
<dbReference type="FunCoup" id="O35923">
    <property type="interactions" value="1211"/>
</dbReference>
<dbReference type="STRING" id="10116.ENSRNOP00000001475"/>
<dbReference type="CarbonylDB" id="O35923"/>
<dbReference type="GlyGen" id="O35923">
    <property type="glycosylation" value="1 site"/>
</dbReference>
<dbReference type="PhosphoSitePlus" id="O35923"/>
<dbReference type="PaxDb" id="10116-ENSRNOP00000001475"/>
<dbReference type="UCSC" id="RGD:2219">
    <property type="organism name" value="rat"/>
</dbReference>
<dbReference type="AGR" id="RGD:2219"/>
<dbReference type="RGD" id="2219">
    <property type="gene designation" value="Brca2"/>
</dbReference>
<dbReference type="eggNOG" id="KOG4751">
    <property type="taxonomic scope" value="Eukaryota"/>
</dbReference>
<dbReference type="InParanoid" id="O35923"/>
<dbReference type="PhylomeDB" id="O35923"/>
<dbReference type="Reactome" id="R-RNO-5685939">
    <property type="pathway name" value="HDR through MMEJ (alt-NHEJ)"/>
</dbReference>
<dbReference type="Reactome" id="R-RNO-5685942">
    <property type="pathway name" value="HDR through Homologous Recombination (HRR)"/>
</dbReference>
<dbReference type="Reactome" id="R-RNO-5693568">
    <property type="pathway name" value="Resolution of D-loop Structures through Holliday Junction Intermediates"/>
</dbReference>
<dbReference type="Reactome" id="R-RNO-5693579">
    <property type="pathway name" value="Homologous DNA Pairing and Strand Exchange"/>
</dbReference>
<dbReference type="Reactome" id="R-RNO-5693616">
    <property type="pathway name" value="Presynaptic phase of homologous DNA pairing and strand exchange"/>
</dbReference>
<dbReference type="EvolutionaryTrace" id="O35923"/>
<dbReference type="PRO" id="PR:O35923"/>
<dbReference type="Proteomes" id="UP000002494">
    <property type="component" value="Unplaced"/>
</dbReference>
<dbReference type="GO" id="GO:0033593">
    <property type="term" value="C:BRCA2-MAGE-D1 complex"/>
    <property type="evidence" value="ECO:0000266"/>
    <property type="project" value="RGD"/>
</dbReference>
<dbReference type="GO" id="GO:0005813">
    <property type="term" value="C:centrosome"/>
    <property type="evidence" value="ECO:0000250"/>
    <property type="project" value="UniProtKB"/>
</dbReference>
<dbReference type="GO" id="GO:0005694">
    <property type="term" value="C:chromosome"/>
    <property type="evidence" value="ECO:0000266"/>
    <property type="project" value="RGD"/>
</dbReference>
<dbReference type="GO" id="GO:0000781">
    <property type="term" value="C:chromosome, telomeric region"/>
    <property type="evidence" value="ECO:0000266"/>
    <property type="project" value="RGD"/>
</dbReference>
<dbReference type="GO" id="GO:0005737">
    <property type="term" value="C:cytoplasm"/>
    <property type="evidence" value="ECO:0000266"/>
    <property type="project" value="RGD"/>
</dbReference>
<dbReference type="GO" id="GO:1990391">
    <property type="term" value="C:DNA repair complex"/>
    <property type="evidence" value="ECO:0000266"/>
    <property type="project" value="RGD"/>
</dbReference>
<dbReference type="GO" id="GO:0000800">
    <property type="term" value="C:lateral element"/>
    <property type="evidence" value="ECO:0000266"/>
    <property type="project" value="RGD"/>
</dbReference>
<dbReference type="GO" id="GO:0000152">
    <property type="term" value="C:nuclear ubiquitin ligase complex"/>
    <property type="evidence" value="ECO:0000266"/>
    <property type="project" value="RGD"/>
</dbReference>
<dbReference type="GO" id="GO:0005634">
    <property type="term" value="C:nucleus"/>
    <property type="evidence" value="ECO:0000266"/>
    <property type="project" value="RGD"/>
</dbReference>
<dbReference type="GO" id="GO:0032991">
    <property type="term" value="C:protein-containing complex"/>
    <property type="evidence" value="ECO:0000266"/>
    <property type="project" value="RGD"/>
</dbReference>
<dbReference type="GO" id="GO:0030141">
    <property type="term" value="C:secretory granule"/>
    <property type="evidence" value="ECO:0000266"/>
    <property type="project" value="RGD"/>
</dbReference>
<dbReference type="GO" id="GO:0043015">
    <property type="term" value="F:gamma-tubulin binding"/>
    <property type="evidence" value="ECO:0000266"/>
    <property type="project" value="RGD"/>
</dbReference>
<dbReference type="GO" id="GO:0010484">
    <property type="term" value="F:histone H3 acetyltransferase activity"/>
    <property type="evidence" value="ECO:0000266"/>
    <property type="project" value="RGD"/>
</dbReference>
<dbReference type="GO" id="GO:0010485">
    <property type="term" value="F:histone H4 acetyltransferase activity"/>
    <property type="evidence" value="ECO:0000266"/>
    <property type="project" value="RGD"/>
</dbReference>
<dbReference type="GO" id="GO:0042802">
    <property type="term" value="F:identical protein binding"/>
    <property type="evidence" value="ECO:0000266"/>
    <property type="project" value="RGD"/>
</dbReference>
<dbReference type="GO" id="GO:0002020">
    <property type="term" value="F:protease binding"/>
    <property type="evidence" value="ECO:0000266"/>
    <property type="project" value="RGD"/>
</dbReference>
<dbReference type="GO" id="GO:0003697">
    <property type="term" value="F:single-stranded DNA binding"/>
    <property type="evidence" value="ECO:0000314"/>
    <property type="project" value="RGD"/>
</dbReference>
<dbReference type="GO" id="GO:0007420">
    <property type="term" value="P:brain development"/>
    <property type="evidence" value="ECO:0000266"/>
    <property type="project" value="RGD"/>
</dbReference>
<dbReference type="GO" id="GO:0008283">
    <property type="term" value="P:cell population proliferation"/>
    <property type="evidence" value="ECO:0000266"/>
    <property type="project" value="RGD"/>
</dbReference>
<dbReference type="GO" id="GO:0071479">
    <property type="term" value="P:cellular response to ionizing radiation"/>
    <property type="evidence" value="ECO:0000266"/>
    <property type="project" value="RGD"/>
</dbReference>
<dbReference type="GO" id="GO:0090398">
    <property type="term" value="P:cellular senescence"/>
    <property type="evidence" value="ECO:0000266"/>
    <property type="project" value="RGD"/>
</dbReference>
<dbReference type="GO" id="GO:0051298">
    <property type="term" value="P:centrosome duplication"/>
    <property type="evidence" value="ECO:0000266"/>
    <property type="project" value="RGD"/>
</dbReference>
<dbReference type="GO" id="GO:0043009">
    <property type="term" value="P:chordate embryonic development"/>
    <property type="evidence" value="ECO:0000266"/>
    <property type="project" value="RGD"/>
</dbReference>
<dbReference type="GO" id="GO:0051276">
    <property type="term" value="P:chromosome organization"/>
    <property type="evidence" value="ECO:0000266"/>
    <property type="project" value="RGD"/>
</dbReference>
<dbReference type="GO" id="GO:0006974">
    <property type="term" value="P:DNA damage response"/>
    <property type="evidence" value="ECO:0000266"/>
    <property type="project" value="RGD"/>
</dbReference>
<dbReference type="GO" id="GO:0006310">
    <property type="term" value="P:DNA recombination"/>
    <property type="evidence" value="ECO:0000314"/>
    <property type="project" value="RGD"/>
</dbReference>
<dbReference type="GO" id="GO:0006302">
    <property type="term" value="P:double-strand break repair"/>
    <property type="evidence" value="ECO:0000266"/>
    <property type="project" value="RGD"/>
</dbReference>
<dbReference type="GO" id="GO:0000724">
    <property type="term" value="P:double-strand break repair via homologous recombination"/>
    <property type="evidence" value="ECO:0000250"/>
    <property type="project" value="UniProtKB"/>
</dbReference>
<dbReference type="GO" id="GO:0070200">
    <property type="term" value="P:establishment of protein localization to telomere"/>
    <property type="evidence" value="ECO:0000266"/>
    <property type="project" value="RGD"/>
</dbReference>
<dbReference type="GO" id="GO:0008585">
    <property type="term" value="P:female gonad development"/>
    <property type="evidence" value="ECO:0000266"/>
    <property type="project" value="RGD"/>
</dbReference>
<dbReference type="GO" id="GO:0071425">
    <property type="term" value="P:hematopoietic stem cell proliferation"/>
    <property type="evidence" value="ECO:0000266"/>
    <property type="project" value="RGD"/>
</dbReference>
<dbReference type="GO" id="GO:0030097">
    <property type="term" value="P:hemopoiesis"/>
    <property type="evidence" value="ECO:0000266"/>
    <property type="project" value="RGD"/>
</dbReference>
<dbReference type="GO" id="GO:0031619">
    <property type="term" value="P:homologous chromosome orientation in meiotic metaphase I"/>
    <property type="evidence" value="ECO:0000315"/>
    <property type="project" value="RGD"/>
</dbReference>
<dbReference type="GO" id="GO:0001833">
    <property type="term" value="P:inner cell mass cell proliferation"/>
    <property type="evidence" value="ECO:0000266"/>
    <property type="project" value="RGD"/>
</dbReference>
<dbReference type="GO" id="GO:0008630">
    <property type="term" value="P:intrinsic apoptotic signaling pathway in response to DNA damage"/>
    <property type="evidence" value="ECO:0000266"/>
    <property type="project" value="RGD"/>
</dbReference>
<dbReference type="GO" id="GO:0042771">
    <property type="term" value="P:intrinsic apoptotic signaling pathway in response to DNA damage by p53 class mediator"/>
    <property type="evidence" value="ECO:0000266"/>
    <property type="project" value="RGD"/>
</dbReference>
<dbReference type="GO" id="GO:0007141">
    <property type="term" value="P:male meiosis I"/>
    <property type="evidence" value="ECO:0000266"/>
    <property type="project" value="RGD"/>
</dbReference>
<dbReference type="GO" id="GO:0030879">
    <property type="term" value="P:mammary gland development"/>
    <property type="evidence" value="ECO:0000315"/>
    <property type="project" value="RGD"/>
</dbReference>
<dbReference type="GO" id="GO:1990426">
    <property type="term" value="P:mitotic recombination-dependent replication fork processing"/>
    <property type="evidence" value="ECO:0000266"/>
    <property type="project" value="RGD"/>
</dbReference>
<dbReference type="GO" id="GO:0035264">
    <property type="term" value="P:multicellular organism growth"/>
    <property type="evidence" value="ECO:0000315"/>
    <property type="project" value="RGD"/>
</dbReference>
<dbReference type="GO" id="GO:0033600">
    <property type="term" value="P:negative regulation of mammary gland epithelial cell proliferation"/>
    <property type="evidence" value="ECO:0000266"/>
    <property type="project" value="RGD"/>
</dbReference>
<dbReference type="GO" id="GO:0006289">
    <property type="term" value="P:nucleotide-excision repair"/>
    <property type="evidence" value="ECO:0000266"/>
    <property type="project" value="RGD"/>
</dbReference>
<dbReference type="GO" id="GO:0001556">
    <property type="term" value="P:oocyte maturation"/>
    <property type="evidence" value="ECO:0000266"/>
    <property type="project" value="RGD"/>
</dbReference>
<dbReference type="GO" id="GO:0045893">
    <property type="term" value="P:positive regulation of DNA-templated transcription"/>
    <property type="evidence" value="ECO:0000266"/>
    <property type="project" value="RGD"/>
</dbReference>
<dbReference type="GO" id="GO:0045931">
    <property type="term" value="P:positive regulation of mitotic cell cycle"/>
    <property type="evidence" value="ECO:0000266"/>
    <property type="project" value="RGD"/>
</dbReference>
<dbReference type="GO" id="GO:0032465">
    <property type="term" value="P:regulation of cytokinesis"/>
    <property type="evidence" value="ECO:0000266"/>
    <property type="project" value="RGD"/>
</dbReference>
<dbReference type="GO" id="GO:0006355">
    <property type="term" value="P:regulation of DNA-templated transcription"/>
    <property type="evidence" value="ECO:0000318"/>
    <property type="project" value="GO_Central"/>
</dbReference>
<dbReference type="GO" id="GO:0031297">
    <property type="term" value="P:replication fork processing"/>
    <property type="evidence" value="ECO:0000266"/>
    <property type="project" value="RGD"/>
</dbReference>
<dbReference type="GO" id="GO:0032355">
    <property type="term" value="P:response to estradiol"/>
    <property type="evidence" value="ECO:0000270"/>
    <property type="project" value="RGD"/>
</dbReference>
<dbReference type="GO" id="GO:0010332">
    <property type="term" value="P:response to gamma radiation"/>
    <property type="evidence" value="ECO:0000266"/>
    <property type="project" value="RGD"/>
</dbReference>
<dbReference type="GO" id="GO:0007584">
    <property type="term" value="P:response to nutrient"/>
    <property type="evidence" value="ECO:0000270"/>
    <property type="project" value="RGD"/>
</dbReference>
<dbReference type="GO" id="GO:0010225">
    <property type="term" value="P:response to UV-C"/>
    <property type="evidence" value="ECO:0000266"/>
    <property type="project" value="RGD"/>
</dbReference>
<dbReference type="GO" id="GO:0010165">
    <property type="term" value="P:response to X-ray"/>
    <property type="evidence" value="ECO:0000266"/>
    <property type="project" value="RGD"/>
</dbReference>
<dbReference type="GO" id="GO:0007283">
    <property type="term" value="P:spermatogenesis"/>
    <property type="evidence" value="ECO:0000315"/>
    <property type="project" value="RGD"/>
</dbReference>
<dbReference type="GO" id="GO:0072089">
    <property type="term" value="P:stem cell proliferation"/>
    <property type="evidence" value="ECO:0000266"/>
    <property type="project" value="RGD"/>
</dbReference>
<dbReference type="GO" id="GO:0000722">
    <property type="term" value="P:telomere maintenance via recombination"/>
    <property type="evidence" value="ECO:0000266"/>
    <property type="project" value="RGD"/>
</dbReference>
<dbReference type="CDD" id="cd04493">
    <property type="entry name" value="BRCA2DBD_OB1"/>
    <property type="match status" value="1"/>
</dbReference>
<dbReference type="CDD" id="cd04494">
    <property type="entry name" value="BRCA2DBD_OB2"/>
    <property type="match status" value="1"/>
</dbReference>
<dbReference type="CDD" id="cd04495">
    <property type="entry name" value="BRCA2DBD_OB3"/>
    <property type="match status" value="1"/>
</dbReference>
<dbReference type="FunFam" id="2.40.50.140:FF:000205">
    <property type="entry name" value="Breast cancer susceptibility protein 2"/>
    <property type="match status" value="1"/>
</dbReference>
<dbReference type="FunFam" id="2.40.50.140:FF:000211">
    <property type="entry name" value="breast cancer type 2 susceptibility protein"/>
    <property type="match status" value="1"/>
</dbReference>
<dbReference type="Gene3D" id="6.10.70.10">
    <property type="match status" value="1"/>
</dbReference>
<dbReference type="Gene3D" id="2.40.50.140">
    <property type="entry name" value="Nucleic acid-binding proteins"/>
    <property type="match status" value="3"/>
</dbReference>
<dbReference type="IDEAL" id="IID50300"/>
<dbReference type="InterPro" id="IPR015525">
    <property type="entry name" value="BRCA2"/>
</dbReference>
<dbReference type="InterPro" id="IPR015252">
    <property type="entry name" value="BRCA2_hlx"/>
</dbReference>
<dbReference type="InterPro" id="IPR036315">
    <property type="entry name" value="BRCA2_hlx_sf"/>
</dbReference>
<dbReference type="InterPro" id="IPR015187">
    <property type="entry name" value="BRCA2_OB_1"/>
</dbReference>
<dbReference type="InterPro" id="IPR048262">
    <property type="entry name" value="BRCA2_OB_2_dom"/>
</dbReference>
<dbReference type="InterPro" id="IPR015188">
    <property type="entry name" value="BRCA2_OB_3"/>
</dbReference>
<dbReference type="InterPro" id="IPR002093">
    <property type="entry name" value="BRCA2_repeat"/>
</dbReference>
<dbReference type="InterPro" id="IPR055077">
    <property type="entry name" value="BRCA2_TR2"/>
</dbReference>
<dbReference type="InterPro" id="IPR012340">
    <property type="entry name" value="NA-bd_OB-fold"/>
</dbReference>
<dbReference type="InterPro" id="IPR015205">
    <property type="entry name" value="Tower_dom"/>
</dbReference>
<dbReference type="PANTHER" id="PTHR11289:SF0">
    <property type="entry name" value="BREAST CANCER TYPE 2 SUSCEPTIBILITY PROTEIN"/>
    <property type="match status" value="1"/>
</dbReference>
<dbReference type="PANTHER" id="PTHR11289">
    <property type="entry name" value="BREAST CANCER TYPE 2 SUSCEPTIBILITY PROTEIN BRCA2"/>
    <property type="match status" value="1"/>
</dbReference>
<dbReference type="Pfam" id="PF09169">
    <property type="entry name" value="BRCA-2_helical"/>
    <property type="match status" value="1"/>
</dbReference>
<dbReference type="Pfam" id="PF09103">
    <property type="entry name" value="BRCA-2_OB1"/>
    <property type="match status" value="1"/>
</dbReference>
<dbReference type="Pfam" id="PF09104">
    <property type="entry name" value="BRCA-2_OB3"/>
    <property type="match status" value="1"/>
</dbReference>
<dbReference type="Pfam" id="PF00634">
    <property type="entry name" value="BRCA2"/>
    <property type="match status" value="7"/>
</dbReference>
<dbReference type="Pfam" id="PF22687">
    <property type="entry name" value="BRCA2_TR2"/>
    <property type="match status" value="1"/>
</dbReference>
<dbReference type="Pfam" id="PF21318">
    <property type="entry name" value="BRCA2DBD_OB2"/>
    <property type="match status" value="1"/>
</dbReference>
<dbReference type="Pfam" id="PF09121">
    <property type="entry name" value="Tower"/>
    <property type="match status" value="1"/>
</dbReference>
<dbReference type="PIRSF" id="PIRSF002397">
    <property type="entry name" value="BRCA2"/>
    <property type="match status" value="1"/>
</dbReference>
<dbReference type="SMART" id="SM01341">
    <property type="entry name" value="Tower"/>
    <property type="match status" value="1"/>
</dbReference>
<dbReference type="SUPFAM" id="SSF81872">
    <property type="entry name" value="BRCA2 helical domain"/>
    <property type="match status" value="1"/>
</dbReference>
<dbReference type="SUPFAM" id="SSF81878">
    <property type="entry name" value="BRCA2 tower domain"/>
    <property type="match status" value="1"/>
</dbReference>
<dbReference type="SUPFAM" id="SSF50249">
    <property type="entry name" value="Nucleic acid-binding proteins"/>
    <property type="match status" value="3"/>
</dbReference>
<dbReference type="PROSITE" id="PS50138">
    <property type="entry name" value="BRCA2_REPEAT"/>
    <property type="match status" value="6"/>
</dbReference>
<feature type="chain" id="PRO_0000064986" description="Breast cancer type 2 susceptibility protein homolog">
    <location>
        <begin position="1"/>
        <end position="3343"/>
    </location>
</feature>
<feature type="repeat" description="BRCA2 1">
    <location>
        <begin position="984"/>
        <end position="1018"/>
    </location>
</feature>
<feature type="repeat" description="BRCA2 2">
    <location>
        <begin position="1197"/>
        <end position="1231"/>
    </location>
</feature>
<feature type="repeat" description="BRCA2 3">
    <location>
        <begin position="1405"/>
        <end position="1439"/>
    </location>
</feature>
<feature type="repeat" description="BRCA2 4">
    <location>
        <begin position="1503"/>
        <end position="1537"/>
    </location>
</feature>
<feature type="repeat" description="BRCA2 5">
    <location>
        <begin position="1645"/>
        <end position="1669"/>
    </location>
</feature>
<feature type="repeat" description="BRCA2 6">
    <location>
        <begin position="1828"/>
        <end position="1845"/>
    </location>
</feature>
<feature type="repeat" description="BRCA2 7">
    <location>
        <begin position="1939"/>
        <end position="1973"/>
    </location>
</feature>
<feature type="repeat" description="BRCA2 8">
    <location>
        <begin position="2019"/>
        <end position="2053"/>
    </location>
</feature>
<feature type="region of interest" description="Interaction with PALB2" evidence="1">
    <location>
        <begin position="1"/>
        <end position="40"/>
    </location>
</feature>
<feature type="region of interest" description="Disordered" evidence="4">
    <location>
        <begin position="40"/>
        <end position="60"/>
    </location>
</feature>
<feature type="region of interest" description="Disordered" evidence="4">
    <location>
        <begin position="348"/>
        <end position="381"/>
    </location>
</feature>
<feature type="region of interest" description="Interaction with NPM1" evidence="1">
    <location>
        <begin position="622"/>
        <end position="982"/>
    </location>
</feature>
<feature type="region of interest" description="Interaction with RAD51" evidence="3">
    <location>
        <begin position="985"/>
        <end position="2050"/>
    </location>
</feature>
<feature type="region of interest" description="Disordered" evidence="4">
    <location>
        <begin position="2059"/>
        <end position="2138"/>
    </location>
</feature>
<feature type="region of interest" description="Interaction with HSF2BP" evidence="2">
    <location>
        <begin position="2233"/>
        <end position="2300"/>
    </location>
</feature>
<feature type="region of interest" description="Disordered" evidence="4">
    <location>
        <begin position="2297"/>
        <end position="2356"/>
    </location>
</feature>
<feature type="region of interest" description="Interaction with FANCD2" evidence="1">
    <location>
        <begin position="2313"/>
        <end position="2475"/>
    </location>
</feature>
<feature type="region of interest" description="Disordered" evidence="4">
    <location>
        <begin position="2377"/>
        <end position="2407"/>
    </location>
</feature>
<feature type="region of interest" description="Interaction with SEM1" evidence="2">
    <location>
        <begin position="2411"/>
        <end position="2762"/>
    </location>
</feature>
<feature type="region of interest" description="Disordered" evidence="4">
    <location>
        <begin position="3114"/>
        <end position="3163"/>
    </location>
</feature>
<feature type="region of interest" description="Disordered" evidence="4">
    <location>
        <begin position="3231"/>
        <end position="3255"/>
    </location>
</feature>
<feature type="region of interest" description="Disordered" evidence="4">
    <location>
        <begin position="3289"/>
        <end position="3343"/>
    </location>
</feature>
<feature type="short sequence motif" description="Nuclear export signal; masked by interaction with SEM1" evidence="2">
    <location>
        <begin position="2612"/>
        <end position="2628"/>
    </location>
</feature>
<feature type="compositionally biased region" description="Basic and acidic residues" evidence="4">
    <location>
        <begin position="45"/>
        <end position="56"/>
    </location>
</feature>
<feature type="compositionally biased region" description="Polar residues" evidence="4">
    <location>
        <begin position="359"/>
        <end position="381"/>
    </location>
</feature>
<feature type="compositionally biased region" description="Polar residues" evidence="4">
    <location>
        <begin position="2083"/>
        <end position="2094"/>
    </location>
</feature>
<feature type="compositionally biased region" description="Polar residues" evidence="4">
    <location>
        <begin position="2101"/>
        <end position="2125"/>
    </location>
</feature>
<feature type="compositionally biased region" description="Polar residues" evidence="4">
    <location>
        <begin position="2307"/>
        <end position="2320"/>
    </location>
</feature>
<feature type="compositionally biased region" description="Polar residues" evidence="4">
    <location>
        <begin position="2332"/>
        <end position="2342"/>
    </location>
</feature>
<feature type="compositionally biased region" description="Basic and acidic residues" evidence="4">
    <location>
        <begin position="2344"/>
        <end position="2356"/>
    </location>
</feature>
<feature type="compositionally biased region" description="Polar residues" evidence="4">
    <location>
        <begin position="3147"/>
        <end position="3163"/>
    </location>
</feature>
<feature type="compositionally biased region" description="Polar residues" evidence="4">
    <location>
        <begin position="3295"/>
        <end position="3310"/>
    </location>
</feature>
<feature type="compositionally biased region" description="Basic and acidic residues" evidence="4">
    <location>
        <begin position="3318"/>
        <end position="3334"/>
    </location>
</feature>
<feature type="modified residue" description="Phosphoserine" evidence="2">
    <location>
        <position position="70"/>
    </location>
</feature>
<feature type="modified residue" description="Phosphoserine" evidence="2">
    <location>
        <position position="475"/>
    </location>
</feature>
<feature type="modified residue" description="Phosphoserine" evidence="2">
    <location>
        <position position="736"/>
    </location>
</feature>
<feature type="modified residue" description="Phosphoserine" evidence="2">
    <location>
        <position position="2063"/>
    </location>
</feature>
<feature type="modified residue" description="Phosphoserine; by CDK1 and CDK2" evidence="2">
    <location>
        <position position="3222"/>
    </location>
</feature>
<feature type="modified residue" description="Phosphoserine" evidence="2">
    <location>
        <position position="3250"/>
    </location>
</feature>
<feature type="turn" evidence="8">
    <location>
        <begin position="2407"/>
        <end position="2409"/>
    </location>
</feature>
<feature type="helix" evidence="8">
    <location>
        <begin position="2410"/>
        <end position="2428"/>
    </location>
</feature>
<feature type="turn" evidence="8">
    <location>
        <begin position="2441"/>
        <end position="2443"/>
    </location>
</feature>
<feature type="strand" evidence="8">
    <location>
        <begin position="2444"/>
        <end position="2446"/>
    </location>
</feature>
<feature type="helix" evidence="8">
    <location>
        <begin position="2453"/>
        <end position="2457"/>
    </location>
</feature>
<feature type="strand" evidence="8">
    <location>
        <begin position="2467"/>
        <end position="2469"/>
    </location>
</feature>
<feature type="helix" evidence="8">
    <location>
        <begin position="2470"/>
        <end position="2473"/>
    </location>
</feature>
<feature type="helix" evidence="8">
    <location>
        <begin position="2479"/>
        <end position="2481"/>
    </location>
</feature>
<feature type="turn" evidence="8">
    <location>
        <begin position="2484"/>
        <end position="2489"/>
    </location>
</feature>
<feature type="helix" evidence="8">
    <location>
        <begin position="2494"/>
        <end position="2498"/>
    </location>
</feature>
<feature type="turn" evidence="8">
    <location>
        <begin position="2500"/>
        <end position="2502"/>
    </location>
</feature>
<feature type="strand" evidence="8">
    <location>
        <begin position="2503"/>
        <end position="2505"/>
    </location>
</feature>
<feature type="strand" evidence="8">
    <location>
        <begin position="2509"/>
        <end position="2511"/>
    </location>
</feature>
<feature type="helix" evidence="8">
    <location>
        <begin position="2512"/>
        <end position="2514"/>
    </location>
</feature>
<feature type="strand" evidence="8">
    <location>
        <begin position="2515"/>
        <end position="2517"/>
    </location>
</feature>
<feature type="helix" evidence="8">
    <location>
        <begin position="2527"/>
        <end position="2535"/>
    </location>
</feature>
<feature type="helix" evidence="8">
    <location>
        <begin position="2542"/>
        <end position="2544"/>
    </location>
</feature>
<feature type="helix" evidence="8">
    <location>
        <begin position="2547"/>
        <end position="2567"/>
    </location>
</feature>
<feature type="turn" evidence="8">
    <location>
        <begin position="2569"/>
        <end position="2571"/>
    </location>
</feature>
<feature type="turn" evidence="8">
    <location>
        <begin position="2573"/>
        <end position="2575"/>
    </location>
</feature>
<feature type="strand" evidence="8">
    <location>
        <begin position="2576"/>
        <end position="2578"/>
    </location>
</feature>
<feature type="helix" evidence="8">
    <location>
        <begin position="2579"/>
        <end position="2593"/>
    </location>
</feature>
<feature type="helix" evidence="8">
    <location>
        <begin position="2601"/>
        <end position="2606"/>
    </location>
</feature>
<feature type="strand" evidence="8">
    <location>
        <begin position="2615"/>
        <end position="2622"/>
    </location>
</feature>
<feature type="strand" evidence="8">
    <location>
        <begin position="2649"/>
        <end position="2652"/>
    </location>
</feature>
<feature type="strand" evidence="8">
    <location>
        <begin position="2657"/>
        <end position="2660"/>
    </location>
</feature>
<feature type="helix" evidence="8">
    <location>
        <begin position="2664"/>
        <end position="2671"/>
    </location>
</feature>
<feature type="strand" evidence="8">
    <location>
        <begin position="2680"/>
        <end position="2684"/>
    </location>
</feature>
<feature type="strand" evidence="8">
    <location>
        <begin position="2687"/>
        <end position="2690"/>
    </location>
</feature>
<feature type="helix" evidence="8">
    <location>
        <begin position="2697"/>
        <end position="2699"/>
    </location>
</feature>
<feature type="strand" evidence="8">
    <location>
        <begin position="2705"/>
        <end position="2707"/>
    </location>
</feature>
<feature type="turn" evidence="8">
    <location>
        <begin position="2710"/>
        <end position="2712"/>
    </location>
</feature>
<feature type="strand" evidence="8">
    <location>
        <begin position="2713"/>
        <end position="2715"/>
    </location>
</feature>
<feature type="strand" evidence="8">
    <location>
        <begin position="2718"/>
        <end position="2720"/>
    </location>
</feature>
<feature type="strand" evidence="8">
    <location>
        <begin position="2722"/>
        <end position="2724"/>
    </location>
</feature>
<feature type="strand" evidence="8">
    <location>
        <begin position="2746"/>
        <end position="2748"/>
    </location>
</feature>
<feature type="strand" evidence="8">
    <location>
        <begin position="2759"/>
        <end position="2763"/>
    </location>
</feature>
<feature type="strand" evidence="8">
    <location>
        <begin position="2765"/>
        <end position="2772"/>
    </location>
</feature>
<feature type="helix" evidence="8">
    <location>
        <begin position="2774"/>
        <end position="2782"/>
    </location>
</feature>
<feature type="strand" evidence="8">
    <location>
        <begin position="2895"/>
        <end position="2903"/>
    </location>
</feature>
<feature type="strand" evidence="8">
    <location>
        <begin position="2905"/>
        <end position="2909"/>
    </location>
</feature>
<feature type="strand" evidence="8">
    <location>
        <begin position="2913"/>
        <end position="2919"/>
    </location>
</feature>
<feature type="turn" evidence="8">
    <location>
        <begin position="2922"/>
        <end position="2927"/>
    </location>
</feature>
<feature type="strand" evidence="8">
    <location>
        <begin position="2934"/>
        <end position="2938"/>
    </location>
</feature>
<feature type="strand" evidence="8">
    <location>
        <begin position="2962"/>
        <end position="2965"/>
    </location>
</feature>
<feature type="helix" evidence="8">
    <location>
        <begin position="2970"/>
        <end position="2973"/>
    </location>
</feature>
<feature type="turn" evidence="8">
    <location>
        <begin position="2974"/>
        <end position="2976"/>
    </location>
</feature>
<feature type="helix" evidence="8">
    <location>
        <begin position="2985"/>
        <end position="2989"/>
    </location>
</feature>
<feature type="helix" evidence="8">
    <location>
        <begin position="2996"/>
        <end position="2998"/>
    </location>
</feature>
<feature type="strand" evidence="8">
    <location>
        <begin position="2999"/>
        <end position="3005"/>
    </location>
</feature>
<feature type="strand" evidence="8">
    <location>
        <begin position="3008"/>
        <end position="3010"/>
    </location>
</feature>
<feature type="strand" evidence="8">
    <location>
        <begin position="3013"/>
        <end position="3015"/>
    </location>
</feature>
<feature type="strand" evidence="8">
    <location>
        <begin position="3018"/>
        <end position="3022"/>
    </location>
</feature>
<feature type="strand" evidence="8">
    <location>
        <begin position="3028"/>
        <end position="3035"/>
    </location>
</feature>
<feature type="strand" evidence="8">
    <location>
        <begin position="3046"/>
        <end position="3054"/>
    </location>
</feature>
<feature type="strand" evidence="8">
    <location>
        <begin position="3064"/>
        <end position="3076"/>
    </location>
</feature>
<feature type="helix" evidence="8">
    <location>
        <begin position="3080"/>
        <end position="3097"/>
    </location>
</feature>
<feature type="helix" evidence="8">
    <location>
        <begin position="3101"/>
        <end position="3110"/>
    </location>
</feature>
<accession>O35923</accession>
<comment type="function">
    <text evidence="2 3">Involved in double-strand break repair and/or homologous recombination. Binds RAD51 and potentiates recombinational DNA repair by promoting assembly of RAD51 onto single-stranded DNA (ssDNA). Acts by targeting RAD51 to ssDNA over double-stranded DNA, enabling RAD51 to displace replication protein-A (RPA) from ssDNA and stabilizing RAD51-ssDNA filaments by blocking ATP hydrolysis. Part of a PALB2-scaffolded HR complex containing RAD51C and which is thought to play a role in DNA repair by HR. May participate in S phase checkpoint activation. Binds selectively to ssDNA, and to ssDNA in tailed duplexes and replication fork structures. May play a role in the extension step after strand invasion at replication-dependent DNA double-strand breaks; together with PALB2 is involved in both POLH localization at collapsed replication forks and DNA polymerization activity. In concert with NPM1, regulates centrosome duplication. Interacts with the TREX-2 complex (transcription and export complex 2) subunits PCID2 and SEM1, and is required to prevent R-loop-associated DNA damage and thus transcription-associated genomic instability, independently of its known role in homologous recombination (By similarity).</text>
</comment>
<comment type="subunit">
    <text evidence="2 3 5">Monomer and dimer. Interacts with RAD51; regulates RAD51 recruitment and function at sites of DNA repair. Interacts with SEM1, WDR16, USP11, DMC1, ROCK2 and NPM1. Interacts with both nonubiquitinated and monoubiquitinated FANCD2; this complex also includes XRCC3 and phosphorylated FANCG. Part of a BRCA complex containing BRCA1, BRCA2 and PALB2. Component of the homologous recombination repair (HR) complex composed of ERCC5/XPG, BRCA2, PALB2, DSS1 and RAD51 (By similarity). Within the complex, interacts with ERCC5/XPG and PALB2 (By similarity). Interacts directly with PALB2 which may serve as a scaffold for a HR complex containing PALB2, BRCA2, RAD51C, RAD51 and XRCC3. Interacts with BRCA1 only in the presence of PALB2 which serves as the bridging protein. Interacts with POLH; the interaction is direct. Interacts with the TREX-2 complex subunits PCID2 and SEM1 (By similarity). Interacts with HSF2BP and BRME1; the interaction with HSF2BP is direct and allows the formation of a ternary complex. The complex BRME1:HSF2BP:BRCA2 interacts with SPATA22, MEIOB and RAD51 (By similarity).</text>
</comment>
<comment type="subcellular location">
    <subcellularLocation>
        <location evidence="2">Nucleus</location>
    </subcellularLocation>
    <subcellularLocation>
        <location evidence="2">Cytoplasm</location>
        <location evidence="2">Cytoskeleton</location>
        <location evidence="2">Microtubule organizing center</location>
        <location evidence="2">Centrosome</location>
    </subcellularLocation>
</comment>
<comment type="tissue specificity">
    <text>Highest expression in testis. Also expressed in spleen, skeletal muscle, thymus, mammary gland, heart, ovary, prostate, liver, lung, kidney and brain.</text>
</comment>
<comment type="PTM">
    <text evidence="2">Phosphorylated by ATM upon irradiation-induced DNA damage. Phosphorylation by CHEK1 and CHEK2 regulates interaction with RAD51. Phosphorylation at Ser-3222 by CDK1 and CDK2 is low in S phase when recombination is active, but increases as cells progress towards mitosis; this phosphorylation prevents homologous recombination-dependent repair during S phase and G2 by inhibiting RAD51 binding.</text>
</comment>
<comment type="PTM">
    <text evidence="2">Ubiquitinated in the absence of DNA damage; this does not lead to proteasomal degradation. In contrast, ubiquitination in response to DNA damage leads to proteasomal degradation.</text>
</comment>
<name>BRCA2_RAT</name>
<reference key="1">
    <citation type="journal article" date="1997" name="Cancer Res.">
        <title>Characterization of the rat and mouse homologues of the BRCA2 breast cancer susceptibility gene.</title>
        <authorList>
            <person name="McAllister K.A."/>
            <person name="Haugen-Strano A."/>
            <person name="Hagevik S."/>
            <person name="Brownlee H.A."/>
            <person name="Collins N.K."/>
            <person name="Futreal P.A."/>
            <person name="Bennett L.M."/>
            <person name="Wiseman R.W."/>
        </authorList>
    </citation>
    <scope>NUCLEOTIDE SEQUENCE [MRNA]</scope>
    <source>
        <strain>Sprague-Dawley</strain>
        <tissue>Testis</tissue>
    </source>
</reference>
<reference key="2">
    <citation type="journal article" date="2002" name="Science">
        <title>BRCA2 function in DNA binding and recombination from a BRCA2-DSS1-ssDNA structure.</title>
        <authorList>
            <person name="Yang H."/>
            <person name="Jeffrey P.D."/>
            <person name="Miller J."/>
            <person name="Kinnucan E."/>
            <person name="Sun Y."/>
            <person name="Thoma N.H."/>
            <person name="Zheng N."/>
            <person name="Chen P.L."/>
            <person name="Lee W.H."/>
            <person name="Pavletich N.P."/>
        </authorList>
    </citation>
    <scope>X-RAY CRYSTALLOGRAPHY (3.4 ANGSTROMS) OF 2335-3151 IN COMPLEX WITH SEM1</scope>
    <scope>INTERACTION WITH SEM1</scope>
</reference>
<evidence type="ECO:0000250" key="1"/>
<evidence type="ECO:0000250" key="2">
    <source>
        <dbReference type="UniProtKB" id="P51587"/>
    </source>
</evidence>
<evidence type="ECO:0000250" key="3">
    <source>
        <dbReference type="UniProtKB" id="P97929"/>
    </source>
</evidence>
<evidence type="ECO:0000256" key="4">
    <source>
        <dbReference type="SAM" id="MobiDB-lite"/>
    </source>
</evidence>
<evidence type="ECO:0000269" key="5">
    <source>
    </source>
</evidence>
<evidence type="ECO:0000305" key="6"/>
<evidence type="ECO:0000312" key="7">
    <source>
        <dbReference type="RGD" id="2219"/>
    </source>
</evidence>
<evidence type="ECO:0007829" key="8">
    <source>
        <dbReference type="PDB" id="1IYJ"/>
    </source>
</evidence>